<name>RL3_THET2</name>
<reference key="1">
    <citation type="journal article" date="2004" name="Nat. Biotechnol.">
        <title>The genome sequence of the extreme thermophile Thermus thermophilus.</title>
        <authorList>
            <person name="Henne A."/>
            <person name="Brueggemann H."/>
            <person name="Raasch C."/>
            <person name="Wiezer A."/>
            <person name="Hartsch T."/>
            <person name="Liesegang H."/>
            <person name="Johann A."/>
            <person name="Lienard T."/>
            <person name="Gohl O."/>
            <person name="Martinez-Arias R."/>
            <person name="Jacobi C."/>
            <person name="Starkuviene V."/>
            <person name="Schlenczeck S."/>
            <person name="Dencker S."/>
            <person name="Huber R."/>
            <person name="Klenk H.-P."/>
            <person name="Kramer W."/>
            <person name="Merkl R."/>
            <person name="Gottschalk G."/>
            <person name="Fritz H.-J."/>
        </authorList>
    </citation>
    <scope>NUCLEOTIDE SEQUENCE [LARGE SCALE GENOMIC DNA]</scope>
    <source>
        <strain>ATCC BAA-163 / DSM 7039 / HB27</strain>
    </source>
</reference>
<sequence length="206" mass="22408">MKGILGVKVGMTRIFRDDRAVPVTVILAGPCPVVQRRTPEKDGYTAVQLGFLPQNPKRVNRPLKGHFAKAGVEPVRILREIRDFNPEGDTVTVEIFKPGERVDVTGTSKGRGFAGVMKRWNFAGGPDSHGAHKIHRHPGSIGNRKTPGRVYKGKKMAGHYGAERVTVMNLEVVDVIPEENLLLVKGAVPGPNGGLVIVRETKKAAK</sequence>
<protein>
    <recommendedName>
        <fullName evidence="1">Large ribosomal subunit protein uL3</fullName>
    </recommendedName>
    <alternativeName>
        <fullName evidence="2">50S ribosomal protein L3</fullName>
    </alternativeName>
</protein>
<keyword id="KW-0002">3D-structure</keyword>
<keyword id="KW-0687">Ribonucleoprotein</keyword>
<keyword id="KW-0689">Ribosomal protein</keyword>
<keyword id="KW-0694">RNA-binding</keyword>
<keyword id="KW-0699">rRNA-binding</keyword>
<accession>Q72I04</accession>
<feature type="chain" id="PRO_0000241428" description="Large ribosomal subunit protein uL3">
    <location>
        <begin position="1"/>
        <end position="206"/>
    </location>
</feature>
<feature type="strand" evidence="3">
    <location>
        <begin position="3"/>
        <end position="16"/>
    </location>
</feature>
<feature type="strand" evidence="3">
    <location>
        <begin position="19"/>
        <end position="27"/>
    </location>
</feature>
<feature type="strand" evidence="3">
    <location>
        <begin position="31"/>
        <end position="37"/>
    </location>
</feature>
<feature type="turn" evidence="3">
    <location>
        <begin position="39"/>
        <end position="41"/>
    </location>
</feature>
<feature type="strand" evidence="3">
    <location>
        <begin position="42"/>
        <end position="44"/>
    </location>
</feature>
<feature type="strand" evidence="3">
    <location>
        <begin position="46"/>
        <end position="53"/>
    </location>
</feature>
<feature type="turn" evidence="3">
    <location>
        <begin position="56"/>
        <end position="62"/>
    </location>
</feature>
<feature type="helix" evidence="3">
    <location>
        <begin position="63"/>
        <end position="68"/>
    </location>
</feature>
<feature type="turn" evidence="3">
    <location>
        <begin position="69"/>
        <end position="71"/>
    </location>
</feature>
<feature type="strand" evidence="3">
    <location>
        <begin position="75"/>
        <end position="82"/>
    </location>
</feature>
<feature type="strand" evidence="3">
    <location>
        <begin position="88"/>
        <end position="91"/>
    </location>
</feature>
<feature type="helix" evidence="3">
    <location>
        <begin position="93"/>
        <end position="95"/>
    </location>
</feature>
<feature type="strand" evidence="4">
    <location>
        <begin position="98"/>
        <end position="100"/>
    </location>
</feature>
<feature type="strand" evidence="3">
    <location>
        <begin position="101"/>
        <end position="107"/>
    </location>
</feature>
<feature type="strand" evidence="3">
    <location>
        <begin position="110"/>
        <end position="113"/>
    </location>
</feature>
<feature type="helix" evidence="3">
    <location>
        <begin position="116"/>
        <end position="119"/>
    </location>
</feature>
<feature type="strand" evidence="3">
    <location>
        <begin position="127"/>
        <end position="130"/>
    </location>
</feature>
<feature type="turn" evidence="5">
    <location>
        <begin position="133"/>
        <end position="136"/>
    </location>
</feature>
<feature type="turn" evidence="3">
    <location>
        <begin position="145"/>
        <end position="147"/>
    </location>
</feature>
<feature type="strand" evidence="3">
    <location>
        <begin position="159"/>
        <end position="176"/>
    </location>
</feature>
<feature type="turn" evidence="3">
    <location>
        <begin position="177"/>
        <end position="180"/>
    </location>
</feature>
<feature type="strand" evidence="3">
    <location>
        <begin position="181"/>
        <end position="184"/>
    </location>
</feature>
<feature type="strand" evidence="3">
    <location>
        <begin position="194"/>
        <end position="200"/>
    </location>
</feature>
<organism>
    <name type="scientific">Thermus thermophilus (strain ATCC BAA-163 / DSM 7039 / HB27)</name>
    <dbReference type="NCBI Taxonomy" id="262724"/>
    <lineage>
        <taxon>Bacteria</taxon>
        <taxon>Thermotogati</taxon>
        <taxon>Deinococcota</taxon>
        <taxon>Deinococci</taxon>
        <taxon>Thermales</taxon>
        <taxon>Thermaceae</taxon>
        <taxon>Thermus</taxon>
    </lineage>
</organism>
<comment type="function">
    <text evidence="1">One of the primary rRNA binding proteins, it binds directly near the 3'-end of the 23S rRNA, where it nucleates assembly of the 50S subunit.</text>
</comment>
<comment type="subunit">
    <text evidence="1">Part of the 50S ribosomal subunit. Forms a cluster with proteins L14 and L19.</text>
</comment>
<comment type="similarity">
    <text evidence="1">Belongs to the universal ribosomal protein uL3 family.</text>
</comment>
<dbReference type="EMBL" id="AE017221">
    <property type="protein sequence ID" value="AAS81670.1"/>
    <property type="molecule type" value="Genomic_DNA"/>
</dbReference>
<dbReference type="RefSeq" id="WP_011173714.1">
    <property type="nucleotide sequence ID" value="NC_005835.1"/>
</dbReference>
<dbReference type="PDB" id="4V4I">
    <property type="method" value="X-ray"/>
    <property type="resolution" value="3.71 A"/>
    <property type="chains" value="C=1-206"/>
</dbReference>
<dbReference type="PDB" id="4V4J">
    <property type="method" value="X-ray"/>
    <property type="resolution" value="3.83 A"/>
    <property type="chains" value="C=1-206"/>
</dbReference>
<dbReference type="PDB" id="4V63">
    <property type="method" value="X-ray"/>
    <property type="resolution" value="3.21 A"/>
    <property type="chains" value="BE/DE=1-206"/>
</dbReference>
<dbReference type="PDB" id="4V67">
    <property type="method" value="X-ray"/>
    <property type="resolution" value="3.00 A"/>
    <property type="chains" value="BE/DE=1-206"/>
</dbReference>
<dbReference type="PDB" id="4V7P">
    <property type="method" value="X-ray"/>
    <property type="resolution" value="3.62 A"/>
    <property type="chains" value="BD/CD=1-206"/>
</dbReference>
<dbReference type="PDB" id="4V83">
    <property type="method" value="X-ray"/>
    <property type="resolution" value="3.50 A"/>
    <property type="chains" value="BD/DD=1-204"/>
</dbReference>
<dbReference type="PDB" id="4V84">
    <property type="method" value="X-ray"/>
    <property type="resolution" value="3.40 A"/>
    <property type="chains" value="BD/DD=1-204"/>
</dbReference>
<dbReference type="PDB" id="4V9J">
    <property type="method" value="X-ray"/>
    <property type="resolution" value="3.86 A"/>
    <property type="chains" value="BE/DE=1-205"/>
</dbReference>
<dbReference type="PDB" id="4V9K">
    <property type="method" value="X-ray"/>
    <property type="resolution" value="3.50 A"/>
    <property type="chains" value="BE/DE=1-205"/>
</dbReference>
<dbReference type="PDB" id="4V9L">
    <property type="method" value="X-ray"/>
    <property type="resolution" value="3.50 A"/>
    <property type="chains" value="BE/DE=1-205"/>
</dbReference>
<dbReference type="PDB" id="4V9M">
    <property type="method" value="X-ray"/>
    <property type="resolution" value="4.00 A"/>
    <property type="chains" value="BE/DE=1-205"/>
</dbReference>
<dbReference type="PDB" id="4V9N">
    <property type="method" value="X-ray"/>
    <property type="resolution" value="3.40 A"/>
    <property type="chains" value="BE/DE=1-204"/>
</dbReference>
<dbReference type="PDB" id="4V9Q">
    <property type="method" value="X-ray"/>
    <property type="resolution" value="3.40 A"/>
    <property type="chains" value="AE/CE=1-204"/>
</dbReference>
<dbReference type="PDB" id="4W29">
    <property type="method" value="X-ray"/>
    <property type="resolution" value="3.80 A"/>
    <property type="chains" value="BE/DE=1-205"/>
</dbReference>
<dbReference type="PDB" id="4XEJ">
    <property type="method" value="X-ray"/>
    <property type="resolution" value="3.80 A"/>
    <property type="chains" value="AL03/BL03=1-204"/>
</dbReference>
<dbReference type="PDB" id="5J4D">
    <property type="method" value="X-ray"/>
    <property type="resolution" value="3.10 A"/>
    <property type="chains" value="F/KB=1-206"/>
</dbReference>
<dbReference type="PDB" id="5V8I">
    <property type="method" value="X-ray"/>
    <property type="resolution" value="3.25 A"/>
    <property type="chains" value="1E/2E=1-206"/>
</dbReference>
<dbReference type="PDB" id="6B4V">
    <property type="method" value="X-ray"/>
    <property type="resolution" value="3.40 A"/>
    <property type="chains" value="F/JB=1-206"/>
</dbReference>
<dbReference type="PDB" id="6BOH">
    <property type="method" value="X-ray"/>
    <property type="resolution" value="3.40 A"/>
    <property type="chains" value="F/KB=1-206"/>
</dbReference>
<dbReference type="PDB" id="6BOK">
    <property type="method" value="X-ray"/>
    <property type="resolution" value="3.55 A"/>
    <property type="chains" value="F/IB=1-206"/>
</dbReference>
<dbReference type="PDB" id="6N1D">
    <property type="method" value="X-ray"/>
    <property type="resolution" value="3.20 A"/>
    <property type="chains" value="AL03/BL03=1-206"/>
</dbReference>
<dbReference type="PDBsum" id="4V4I"/>
<dbReference type="PDBsum" id="4V4J"/>
<dbReference type="PDBsum" id="4V63"/>
<dbReference type="PDBsum" id="4V67"/>
<dbReference type="PDBsum" id="4V7P"/>
<dbReference type="PDBsum" id="4V83"/>
<dbReference type="PDBsum" id="4V84"/>
<dbReference type="PDBsum" id="4V9J"/>
<dbReference type="PDBsum" id="4V9K"/>
<dbReference type="PDBsum" id="4V9L"/>
<dbReference type="PDBsum" id="4V9M"/>
<dbReference type="PDBsum" id="4V9N"/>
<dbReference type="PDBsum" id="4V9Q"/>
<dbReference type="PDBsum" id="4W29"/>
<dbReference type="PDBsum" id="4XEJ"/>
<dbReference type="PDBsum" id="5J4D"/>
<dbReference type="PDBsum" id="5V8I"/>
<dbReference type="PDBsum" id="6B4V"/>
<dbReference type="PDBsum" id="6BOH"/>
<dbReference type="PDBsum" id="6BOK"/>
<dbReference type="PDBsum" id="6N1D"/>
<dbReference type="SMR" id="Q72I04"/>
<dbReference type="IntAct" id="Q72I04">
    <property type="interactions" value="4"/>
</dbReference>
<dbReference type="GeneID" id="3167929"/>
<dbReference type="KEGG" id="tth:TT_C1328"/>
<dbReference type="eggNOG" id="COG0087">
    <property type="taxonomic scope" value="Bacteria"/>
</dbReference>
<dbReference type="HOGENOM" id="CLU_044142_4_1_0"/>
<dbReference type="OrthoDB" id="9806135at2"/>
<dbReference type="Proteomes" id="UP000000592">
    <property type="component" value="Chromosome"/>
</dbReference>
<dbReference type="GO" id="GO:0022625">
    <property type="term" value="C:cytosolic large ribosomal subunit"/>
    <property type="evidence" value="ECO:0007669"/>
    <property type="project" value="TreeGrafter"/>
</dbReference>
<dbReference type="GO" id="GO:0019843">
    <property type="term" value="F:rRNA binding"/>
    <property type="evidence" value="ECO:0007669"/>
    <property type="project" value="UniProtKB-UniRule"/>
</dbReference>
<dbReference type="GO" id="GO:0003735">
    <property type="term" value="F:structural constituent of ribosome"/>
    <property type="evidence" value="ECO:0007669"/>
    <property type="project" value="InterPro"/>
</dbReference>
<dbReference type="GO" id="GO:0006412">
    <property type="term" value="P:translation"/>
    <property type="evidence" value="ECO:0007669"/>
    <property type="project" value="UniProtKB-UniRule"/>
</dbReference>
<dbReference type="FunFam" id="2.40.30.10:FF:000004">
    <property type="entry name" value="50S ribosomal protein L3"/>
    <property type="match status" value="1"/>
</dbReference>
<dbReference type="FunFam" id="3.30.160.810:FF:000001">
    <property type="entry name" value="50S ribosomal protein L3"/>
    <property type="match status" value="1"/>
</dbReference>
<dbReference type="Gene3D" id="3.30.160.810">
    <property type="match status" value="1"/>
</dbReference>
<dbReference type="Gene3D" id="2.40.30.10">
    <property type="entry name" value="Translation factors"/>
    <property type="match status" value="1"/>
</dbReference>
<dbReference type="HAMAP" id="MF_01325_B">
    <property type="entry name" value="Ribosomal_uL3_B"/>
    <property type="match status" value="1"/>
</dbReference>
<dbReference type="InterPro" id="IPR000597">
    <property type="entry name" value="Ribosomal_uL3"/>
</dbReference>
<dbReference type="InterPro" id="IPR019927">
    <property type="entry name" value="Ribosomal_uL3_bac/org-type"/>
</dbReference>
<dbReference type="InterPro" id="IPR019926">
    <property type="entry name" value="Ribosomal_uL3_CS"/>
</dbReference>
<dbReference type="InterPro" id="IPR009000">
    <property type="entry name" value="Transl_B-barrel_sf"/>
</dbReference>
<dbReference type="NCBIfam" id="TIGR03625">
    <property type="entry name" value="L3_bact"/>
    <property type="match status" value="1"/>
</dbReference>
<dbReference type="PANTHER" id="PTHR11229">
    <property type="entry name" value="50S RIBOSOMAL PROTEIN L3"/>
    <property type="match status" value="1"/>
</dbReference>
<dbReference type="PANTHER" id="PTHR11229:SF16">
    <property type="entry name" value="LARGE RIBOSOMAL SUBUNIT PROTEIN UL3C"/>
    <property type="match status" value="1"/>
</dbReference>
<dbReference type="Pfam" id="PF00297">
    <property type="entry name" value="Ribosomal_L3"/>
    <property type="match status" value="1"/>
</dbReference>
<dbReference type="SUPFAM" id="SSF50447">
    <property type="entry name" value="Translation proteins"/>
    <property type="match status" value="1"/>
</dbReference>
<dbReference type="PROSITE" id="PS00474">
    <property type="entry name" value="RIBOSOMAL_L3"/>
    <property type="match status" value="1"/>
</dbReference>
<proteinExistence type="evidence at protein level"/>
<evidence type="ECO:0000255" key="1">
    <source>
        <dbReference type="HAMAP-Rule" id="MF_01325"/>
    </source>
</evidence>
<evidence type="ECO:0000305" key="2"/>
<evidence type="ECO:0007829" key="3">
    <source>
        <dbReference type="PDB" id="4V67"/>
    </source>
</evidence>
<evidence type="ECO:0007829" key="4">
    <source>
        <dbReference type="PDB" id="4V9L"/>
    </source>
</evidence>
<evidence type="ECO:0007829" key="5">
    <source>
        <dbReference type="PDB" id="4V9Q"/>
    </source>
</evidence>
<gene>
    <name evidence="1" type="primary">rplC</name>
    <name type="ordered locus">TT_C1328</name>
</gene>